<organism>
    <name type="scientific">Leptothrix cholodnii (strain ATCC 51168 / LMG 8142 / SP-6)</name>
    <name type="common">Leptothrix discophora (strain SP-6)</name>
    <dbReference type="NCBI Taxonomy" id="395495"/>
    <lineage>
        <taxon>Bacteria</taxon>
        <taxon>Pseudomonadati</taxon>
        <taxon>Pseudomonadota</taxon>
        <taxon>Betaproteobacteria</taxon>
        <taxon>Burkholderiales</taxon>
        <taxon>Sphaerotilaceae</taxon>
        <taxon>Leptothrix</taxon>
    </lineage>
</organism>
<accession>B1Y1E7</accession>
<feature type="chain" id="PRO_1000131983" description="Aspartate/glutamate leucyltransferase">
    <location>
        <begin position="1"/>
        <end position="247"/>
    </location>
</feature>
<sequence>MTHPKELPLAQLQFYATAPYPCSYLADRMARSQVATPSHLINAETYSGLVAAGFRRSGMFTYRPYCDGCQCCVPLRVPVNDFAPSRSQRRAWKQHQGLQARVMRLCFVPEHYALYLRYQNRRHAGGGMDEDSVDQYTQFLLQSRVNSRLVEFREPGIGDQPGALRIVSILDVLNDGLSAVYTFYEPDPACSYGTYNVMWQIAQARELGLPYLYLGYWIEASAKMAYKSLFQPHEMLLGGTWQRQPAR</sequence>
<protein>
    <recommendedName>
        <fullName evidence="1">Aspartate/glutamate leucyltransferase</fullName>
        <ecNumber evidence="1">2.3.2.29</ecNumber>
    </recommendedName>
</protein>
<gene>
    <name evidence="1" type="primary">bpt</name>
    <name type="ordered locus">Lcho_1979</name>
</gene>
<proteinExistence type="inferred from homology"/>
<reference key="1">
    <citation type="submission" date="2008-03" db="EMBL/GenBank/DDBJ databases">
        <title>Complete sequence of Leptothrix cholodnii SP-6.</title>
        <authorList>
            <consortium name="US DOE Joint Genome Institute"/>
            <person name="Copeland A."/>
            <person name="Lucas S."/>
            <person name="Lapidus A."/>
            <person name="Glavina del Rio T."/>
            <person name="Dalin E."/>
            <person name="Tice H."/>
            <person name="Bruce D."/>
            <person name="Goodwin L."/>
            <person name="Pitluck S."/>
            <person name="Chertkov O."/>
            <person name="Brettin T."/>
            <person name="Detter J.C."/>
            <person name="Han C."/>
            <person name="Kuske C.R."/>
            <person name="Schmutz J."/>
            <person name="Larimer F."/>
            <person name="Land M."/>
            <person name="Hauser L."/>
            <person name="Kyrpides N."/>
            <person name="Lykidis A."/>
            <person name="Emerson D."/>
            <person name="Richardson P."/>
        </authorList>
    </citation>
    <scope>NUCLEOTIDE SEQUENCE [LARGE SCALE GENOMIC DNA]</scope>
    <source>
        <strain>ATCC 51168 / LMG 8142 / SP-6</strain>
    </source>
</reference>
<dbReference type="EC" id="2.3.2.29" evidence="1"/>
<dbReference type="EMBL" id="CP001013">
    <property type="protein sequence ID" value="ACB34246.1"/>
    <property type="molecule type" value="Genomic_DNA"/>
</dbReference>
<dbReference type="RefSeq" id="WP_012347006.1">
    <property type="nucleotide sequence ID" value="NC_010524.1"/>
</dbReference>
<dbReference type="SMR" id="B1Y1E7"/>
<dbReference type="STRING" id="395495.Lcho_1979"/>
<dbReference type="KEGG" id="lch:Lcho_1979"/>
<dbReference type="eggNOG" id="COG2935">
    <property type="taxonomic scope" value="Bacteria"/>
</dbReference>
<dbReference type="HOGENOM" id="CLU_077607_0_0_4"/>
<dbReference type="OrthoDB" id="9782022at2"/>
<dbReference type="Proteomes" id="UP000001693">
    <property type="component" value="Chromosome"/>
</dbReference>
<dbReference type="GO" id="GO:0005737">
    <property type="term" value="C:cytoplasm"/>
    <property type="evidence" value="ECO:0007669"/>
    <property type="project" value="UniProtKB-SubCell"/>
</dbReference>
<dbReference type="GO" id="GO:0004057">
    <property type="term" value="F:arginyl-tRNA--protein transferase activity"/>
    <property type="evidence" value="ECO:0007669"/>
    <property type="project" value="InterPro"/>
</dbReference>
<dbReference type="GO" id="GO:0008914">
    <property type="term" value="F:leucyl-tRNA--protein transferase activity"/>
    <property type="evidence" value="ECO:0007669"/>
    <property type="project" value="UniProtKB-UniRule"/>
</dbReference>
<dbReference type="GO" id="GO:0071596">
    <property type="term" value="P:ubiquitin-dependent protein catabolic process via the N-end rule pathway"/>
    <property type="evidence" value="ECO:0007669"/>
    <property type="project" value="InterPro"/>
</dbReference>
<dbReference type="HAMAP" id="MF_00689">
    <property type="entry name" value="Bpt"/>
    <property type="match status" value="1"/>
</dbReference>
<dbReference type="InterPro" id="IPR016181">
    <property type="entry name" value="Acyl_CoA_acyltransferase"/>
</dbReference>
<dbReference type="InterPro" id="IPR017138">
    <property type="entry name" value="Asp_Glu_LeuTrfase"/>
</dbReference>
<dbReference type="InterPro" id="IPR030700">
    <property type="entry name" value="N-end_Aminoacyl_Trfase"/>
</dbReference>
<dbReference type="InterPro" id="IPR007472">
    <property type="entry name" value="N-end_Aminoacyl_Trfase_C"/>
</dbReference>
<dbReference type="InterPro" id="IPR007471">
    <property type="entry name" value="N-end_Aminoacyl_Trfase_N"/>
</dbReference>
<dbReference type="NCBIfam" id="NF002341">
    <property type="entry name" value="PRK01305.1-1"/>
    <property type="match status" value="1"/>
</dbReference>
<dbReference type="NCBIfam" id="NF002342">
    <property type="entry name" value="PRK01305.1-3"/>
    <property type="match status" value="1"/>
</dbReference>
<dbReference type="NCBIfam" id="NF002346">
    <property type="entry name" value="PRK01305.2-3"/>
    <property type="match status" value="1"/>
</dbReference>
<dbReference type="PANTHER" id="PTHR21367">
    <property type="entry name" value="ARGININE-TRNA-PROTEIN TRANSFERASE 1"/>
    <property type="match status" value="1"/>
</dbReference>
<dbReference type="PANTHER" id="PTHR21367:SF1">
    <property type="entry name" value="ARGINYL-TRNA--PROTEIN TRANSFERASE 1"/>
    <property type="match status" value="1"/>
</dbReference>
<dbReference type="Pfam" id="PF04377">
    <property type="entry name" value="ATE_C"/>
    <property type="match status" value="1"/>
</dbReference>
<dbReference type="Pfam" id="PF04376">
    <property type="entry name" value="ATE_N"/>
    <property type="match status" value="1"/>
</dbReference>
<dbReference type="PIRSF" id="PIRSF037208">
    <property type="entry name" value="ATE_pro_prd"/>
    <property type="match status" value="1"/>
</dbReference>
<dbReference type="SUPFAM" id="SSF55729">
    <property type="entry name" value="Acyl-CoA N-acyltransferases (Nat)"/>
    <property type="match status" value="1"/>
</dbReference>
<keyword id="KW-0012">Acyltransferase</keyword>
<keyword id="KW-0963">Cytoplasm</keyword>
<keyword id="KW-1185">Reference proteome</keyword>
<keyword id="KW-0808">Transferase</keyword>
<name>BPT_LEPCP</name>
<comment type="function">
    <text evidence="1">Functions in the N-end rule pathway of protein degradation where it conjugates Leu from its aminoacyl-tRNA to the N-termini of proteins containing an N-terminal aspartate or glutamate.</text>
</comment>
<comment type="catalytic activity">
    <reaction evidence="1">
        <text>N-terminal L-glutamyl-[protein] + L-leucyl-tRNA(Leu) = N-terminal L-leucyl-L-glutamyl-[protein] + tRNA(Leu) + H(+)</text>
        <dbReference type="Rhea" id="RHEA:50412"/>
        <dbReference type="Rhea" id="RHEA-COMP:9613"/>
        <dbReference type="Rhea" id="RHEA-COMP:9622"/>
        <dbReference type="Rhea" id="RHEA-COMP:12664"/>
        <dbReference type="Rhea" id="RHEA-COMP:12668"/>
        <dbReference type="ChEBI" id="CHEBI:15378"/>
        <dbReference type="ChEBI" id="CHEBI:64721"/>
        <dbReference type="ChEBI" id="CHEBI:78442"/>
        <dbReference type="ChEBI" id="CHEBI:78494"/>
        <dbReference type="ChEBI" id="CHEBI:133041"/>
        <dbReference type="EC" id="2.3.2.29"/>
    </reaction>
</comment>
<comment type="catalytic activity">
    <reaction evidence="1">
        <text>N-terminal L-aspartyl-[protein] + L-leucyl-tRNA(Leu) = N-terminal L-leucyl-L-aspartyl-[protein] + tRNA(Leu) + H(+)</text>
        <dbReference type="Rhea" id="RHEA:50420"/>
        <dbReference type="Rhea" id="RHEA-COMP:9613"/>
        <dbReference type="Rhea" id="RHEA-COMP:9622"/>
        <dbReference type="Rhea" id="RHEA-COMP:12669"/>
        <dbReference type="Rhea" id="RHEA-COMP:12674"/>
        <dbReference type="ChEBI" id="CHEBI:15378"/>
        <dbReference type="ChEBI" id="CHEBI:64720"/>
        <dbReference type="ChEBI" id="CHEBI:78442"/>
        <dbReference type="ChEBI" id="CHEBI:78494"/>
        <dbReference type="ChEBI" id="CHEBI:133042"/>
        <dbReference type="EC" id="2.3.2.29"/>
    </reaction>
</comment>
<comment type="subcellular location">
    <subcellularLocation>
        <location evidence="1">Cytoplasm</location>
    </subcellularLocation>
</comment>
<comment type="similarity">
    <text evidence="1">Belongs to the R-transferase family. Bpt subfamily.</text>
</comment>
<evidence type="ECO:0000255" key="1">
    <source>
        <dbReference type="HAMAP-Rule" id="MF_00689"/>
    </source>
</evidence>